<protein>
    <recommendedName>
        <fullName evidence="1">ATP synthase subunit b</fullName>
    </recommendedName>
    <alternativeName>
        <fullName evidence="1">ATP synthase F(0) sector subunit b</fullName>
    </alternativeName>
    <alternativeName>
        <fullName evidence="1">ATPase subunit I</fullName>
    </alternativeName>
    <alternativeName>
        <fullName evidence="1">F-type ATPase subunit b</fullName>
        <shortName evidence="1">F-ATPase subunit b</shortName>
    </alternativeName>
</protein>
<organism>
    <name type="scientific">Shewanella sediminis (strain HAW-EB3)</name>
    <dbReference type="NCBI Taxonomy" id="425104"/>
    <lineage>
        <taxon>Bacteria</taxon>
        <taxon>Pseudomonadati</taxon>
        <taxon>Pseudomonadota</taxon>
        <taxon>Gammaproteobacteria</taxon>
        <taxon>Alteromonadales</taxon>
        <taxon>Shewanellaceae</taxon>
        <taxon>Shewanella</taxon>
    </lineage>
</organism>
<evidence type="ECO:0000255" key="1">
    <source>
        <dbReference type="HAMAP-Rule" id="MF_01398"/>
    </source>
</evidence>
<keyword id="KW-0066">ATP synthesis</keyword>
<keyword id="KW-0997">Cell inner membrane</keyword>
<keyword id="KW-1003">Cell membrane</keyword>
<keyword id="KW-0138">CF(0)</keyword>
<keyword id="KW-0375">Hydrogen ion transport</keyword>
<keyword id="KW-0406">Ion transport</keyword>
<keyword id="KW-0472">Membrane</keyword>
<keyword id="KW-1185">Reference proteome</keyword>
<keyword id="KW-0812">Transmembrane</keyword>
<keyword id="KW-1133">Transmembrane helix</keyword>
<keyword id="KW-0813">Transport</keyword>
<comment type="function">
    <text evidence="1">F(1)F(0) ATP synthase produces ATP from ADP in the presence of a proton or sodium gradient. F-type ATPases consist of two structural domains, F(1) containing the extramembraneous catalytic core and F(0) containing the membrane proton channel, linked together by a central stalk and a peripheral stalk. During catalysis, ATP synthesis in the catalytic domain of F(1) is coupled via a rotary mechanism of the central stalk subunits to proton translocation.</text>
</comment>
<comment type="function">
    <text evidence="1">Component of the F(0) channel, it forms part of the peripheral stalk, linking F(1) to F(0).</text>
</comment>
<comment type="subunit">
    <text evidence="1">F-type ATPases have 2 components, F(1) - the catalytic core - and F(0) - the membrane proton channel. F(1) has five subunits: alpha(3), beta(3), gamma(1), delta(1), epsilon(1). F(0) has three main subunits: a(1), b(2) and c(10-14). The alpha and beta chains form an alternating ring which encloses part of the gamma chain. F(1) is attached to F(0) by a central stalk formed by the gamma and epsilon chains, while a peripheral stalk is formed by the delta and b chains.</text>
</comment>
<comment type="subcellular location">
    <subcellularLocation>
        <location evidence="1">Cell inner membrane</location>
        <topology evidence="1">Single-pass membrane protein</topology>
    </subcellularLocation>
</comment>
<comment type="similarity">
    <text evidence="1">Belongs to the ATPase B chain family.</text>
</comment>
<accession>A8G1W9</accession>
<dbReference type="EMBL" id="CP000821">
    <property type="protein sequence ID" value="ABV39092.1"/>
    <property type="molecule type" value="Genomic_DNA"/>
</dbReference>
<dbReference type="RefSeq" id="WP_012144819.1">
    <property type="nucleotide sequence ID" value="NC_009831.1"/>
</dbReference>
<dbReference type="SMR" id="A8G1W9"/>
<dbReference type="STRING" id="425104.Ssed_4490"/>
<dbReference type="KEGG" id="sse:Ssed_4490"/>
<dbReference type="eggNOG" id="COG0711">
    <property type="taxonomic scope" value="Bacteria"/>
</dbReference>
<dbReference type="HOGENOM" id="CLU_079215_4_5_6"/>
<dbReference type="OrthoDB" id="9788020at2"/>
<dbReference type="Proteomes" id="UP000002015">
    <property type="component" value="Chromosome"/>
</dbReference>
<dbReference type="GO" id="GO:0005886">
    <property type="term" value="C:plasma membrane"/>
    <property type="evidence" value="ECO:0007669"/>
    <property type="project" value="UniProtKB-SubCell"/>
</dbReference>
<dbReference type="GO" id="GO:0045259">
    <property type="term" value="C:proton-transporting ATP synthase complex"/>
    <property type="evidence" value="ECO:0007669"/>
    <property type="project" value="UniProtKB-KW"/>
</dbReference>
<dbReference type="GO" id="GO:0046933">
    <property type="term" value="F:proton-transporting ATP synthase activity, rotational mechanism"/>
    <property type="evidence" value="ECO:0007669"/>
    <property type="project" value="UniProtKB-UniRule"/>
</dbReference>
<dbReference type="GO" id="GO:0046961">
    <property type="term" value="F:proton-transporting ATPase activity, rotational mechanism"/>
    <property type="evidence" value="ECO:0007669"/>
    <property type="project" value="TreeGrafter"/>
</dbReference>
<dbReference type="CDD" id="cd06503">
    <property type="entry name" value="ATP-synt_Fo_b"/>
    <property type="match status" value="1"/>
</dbReference>
<dbReference type="FunFam" id="1.20.5.620:FF:000001">
    <property type="entry name" value="ATP synthase subunit b"/>
    <property type="match status" value="1"/>
</dbReference>
<dbReference type="Gene3D" id="1.20.5.620">
    <property type="entry name" value="F1F0 ATP synthase subunit B, membrane domain"/>
    <property type="match status" value="1"/>
</dbReference>
<dbReference type="HAMAP" id="MF_01398">
    <property type="entry name" value="ATP_synth_b_bprime"/>
    <property type="match status" value="1"/>
</dbReference>
<dbReference type="InterPro" id="IPR028987">
    <property type="entry name" value="ATP_synth_B-like_membr_sf"/>
</dbReference>
<dbReference type="InterPro" id="IPR002146">
    <property type="entry name" value="ATP_synth_b/b'su_bac/chlpt"/>
</dbReference>
<dbReference type="InterPro" id="IPR005864">
    <property type="entry name" value="ATP_synth_F0_bsu_bac"/>
</dbReference>
<dbReference type="InterPro" id="IPR050059">
    <property type="entry name" value="ATP_synthase_B_chain"/>
</dbReference>
<dbReference type="NCBIfam" id="TIGR01144">
    <property type="entry name" value="ATP_synt_b"/>
    <property type="match status" value="1"/>
</dbReference>
<dbReference type="NCBIfam" id="NF004411">
    <property type="entry name" value="PRK05759.1-2"/>
    <property type="match status" value="1"/>
</dbReference>
<dbReference type="NCBIfam" id="NF004413">
    <property type="entry name" value="PRK05759.1-4"/>
    <property type="match status" value="1"/>
</dbReference>
<dbReference type="PANTHER" id="PTHR33445:SF1">
    <property type="entry name" value="ATP SYNTHASE SUBUNIT B"/>
    <property type="match status" value="1"/>
</dbReference>
<dbReference type="PANTHER" id="PTHR33445">
    <property type="entry name" value="ATP SYNTHASE SUBUNIT B', CHLOROPLASTIC"/>
    <property type="match status" value="1"/>
</dbReference>
<dbReference type="Pfam" id="PF00430">
    <property type="entry name" value="ATP-synt_B"/>
    <property type="match status" value="1"/>
</dbReference>
<dbReference type="SUPFAM" id="SSF81573">
    <property type="entry name" value="F1F0 ATP synthase subunit B, membrane domain"/>
    <property type="match status" value="1"/>
</dbReference>
<proteinExistence type="inferred from homology"/>
<reference key="1">
    <citation type="submission" date="2007-08" db="EMBL/GenBank/DDBJ databases">
        <title>Complete sequence of Shewanella sediminis HAW-EB3.</title>
        <authorList>
            <consortium name="US DOE Joint Genome Institute"/>
            <person name="Copeland A."/>
            <person name="Lucas S."/>
            <person name="Lapidus A."/>
            <person name="Barry K."/>
            <person name="Glavina del Rio T."/>
            <person name="Dalin E."/>
            <person name="Tice H."/>
            <person name="Pitluck S."/>
            <person name="Chertkov O."/>
            <person name="Brettin T."/>
            <person name="Bruce D."/>
            <person name="Detter J.C."/>
            <person name="Han C."/>
            <person name="Schmutz J."/>
            <person name="Larimer F."/>
            <person name="Land M."/>
            <person name="Hauser L."/>
            <person name="Kyrpides N."/>
            <person name="Kim E."/>
            <person name="Zhao J.-S."/>
            <person name="Richardson P."/>
        </authorList>
    </citation>
    <scope>NUCLEOTIDE SEQUENCE [LARGE SCALE GENOMIC DNA]</scope>
    <source>
        <strain>HAW-EB3</strain>
    </source>
</reference>
<feature type="chain" id="PRO_0000368764" description="ATP synthase subunit b">
    <location>
        <begin position="1"/>
        <end position="156"/>
    </location>
</feature>
<feature type="transmembrane region" description="Helical" evidence="1">
    <location>
        <begin position="13"/>
        <end position="33"/>
    </location>
</feature>
<name>ATPF_SHESH</name>
<sequence length="156" mass="17387">MNINATLLGQTVAFIIFVWFCMKFVWPPLMNAIEERQKRIADGLADADRAVKDLELAQSKATDQLKDAKATANEIIEQANKRKAQIVDEAKAEADAERAKIIAQGQAEIEAERNRVKEDLRKQVATLAIYGAEKILERSIDEAAHSDIVNKLVAEL</sequence>
<gene>
    <name evidence="1" type="primary">atpF</name>
    <name type="ordered locus">Ssed_4490</name>
</gene>